<organism>
    <name type="scientific">Aspergillus clavatus (strain ATCC 1007 / CBS 513.65 / DSM 816 / NCTC 3887 / NRRL 1 / QM 1276 / 107)</name>
    <dbReference type="NCBI Taxonomy" id="344612"/>
    <lineage>
        <taxon>Eukaryota</taxon>
        <taxon>Fungi</taxon>
        <taxon>Dikarya</taxon>
        <taxon>Ascomycota</taxon>
        <taxon>Pezizomycotina</taxon>
        <taxon>Eurotiomycetes</taxon>
        <taxon>Eurotiomycetidae</taxon>
        <taxon>Eurotiales</taxon>
        <taxon>Aspergillaceae</taxon>
        <taxon>Aspergillus</taxon>
        <taxon>Aspergillus subgen. Fumigati</taxon>
    </lineage>
</organism>
<evidence type="ECO:0000255" key="1">
    <source>
        <dbReference type="HAMAP-Rule" id="MF_03009"/>
    </source>
</evidence>
<evidence type="ECO:0000256" key="2">
    <source>
        <dbReference type="SAM" id="MobiDB-lite"/>
    </source>
</evidence>
<name>EIF3J_ASPCL</name>
<dbReference type="EMBL" id="DS027052">
    <property type="protein sequence ID" value="EAW11165.1"/>
    <property type="molecule type" value="Genomic_DNA"/>
</dbReference>
<dbReference type="RefSeq" id="XP_001272591.1">
    <property type="nucleotide sequence ID" value="XM_001272590.1"/>
</dbReference>
<dbReference type="SMR" id="A1CE66"/>
<dbReference type="STRING" id="344612.A1CE66"/>
<dbReference type="EnsemblFungi" id="EAW11165">
    <property type="protein sequence ID" value="EAW11165"/>
    <property type="gene ID" value="ACLA_088540"/>
</dbReference>
<dbReference type="GeneID" id="4705000"/>
<dbReference type="KEGG" id="act:ACLA_088540"/>
<dbReference type="VEuPathDB" id="FungiDB:ACLA_088540"/>
<dbReference type="eggNOG" id="KOG4813">
    <property type="taxonomic scope" value="Eukaryota"/>
</dbReference>
<dbReference type="HOGENOM" id="CLU_087988_0_0_1"/>
<dbReference type="OMA" id="KPHYALW"/>
<dbReference type="OrthoDB" id="20381at2759"/>
<dbReference type="Proteomes" id="UP000006701">
    <property type="component" value="Unassembled WGS sequence"/>
</dbReference>
<dbReference type="GO" id="GO:0016282">
    <property type="term" value="C:eukaryotic 43S preinitiation complex"/>
    <property type="evidence" value="ECO:0007669"/>
    <property type="project" value="UniProtKB-UniRule"/>
</dbReference>
<dbReference type="GO" id="GO:0033290">
    <property type="term" value="C:eukaryotic 48S preinitiation complex"/>
    <property type="evidence" value="ECO:0007669"/>
    <property type="project" value="UniProtKB-UniRule"/>
</dbReference>
<dbReference type="GO" id="GO:0005852">
    <property type="term" value="C:eukaryotic translation initiation factor 3 complex"/>
    <property type="evidence" value="ECO:0007669"/>
    <property type="project" value="UniProtKB-UniRule"/>
</dbReference>
<dbReference type="GO" id="GO:0003743">
    <property type="term" value="F:translation initiation factor activity"/>
    <property type="evidence" value="ECO:0007669"/>
    <property type="project" value="UniProtKB-UniRule"/>
</dbReference>
<dbReference type="GO" id="GO:0001732">
    <property type="term" value="P:formation of cytoplasmic translation initiation complex"/>
    <property type="evidence" value="ECO:0007669"/>
    <property type="project" value="UniProtKB-UniRule"/>
</dbReference>
<dbReference type="FunFam" id="1.10.246.60:FF:000003">
    <property type="entry name" value="Eukaryotic translation initiation factor 3 subunit J"/>
    <property type="match status" value="1"/>
</dbReference>
<dbReference type="Gene3D" id="1.10.246.60">
    <property type="entry name" value="Eukaryotic translation initiation factor 3 like domains"/>
    <property type="match status" value="1"/>
</dbReference>
<dbReference type="HAMAP" id="MF_03009">
    <property type="entry name" value="eIF3j"/>
    <property type="match status" value="1"/>
</dbReference>
<dbReference type="InterPro" id="IPR023194">
    <property type="entry name" value="eIF3-like_dom_sf"/>
</dbReference>
<dbReference type="InterPro" id="IPR013906">
    <property type="entry name" value="eIF3j"/>
</dbReference>
<dbReference type="PANTHER" id="PTHR21681">
    <property type="entry name" value="EUKARYOTIC TRANSLATION INITIATION FACTOR 3 SUBUNIT J"/>
    <property type="match status" value="1"/>
</dbReference>
<dbReference type="PANTHER" id="PTHR21681:SF0">
    <property type="entry name" value="EUKARYOTIC TRANSLATION INITIATION FACTOR 3 SUBUNIT J"/>
    <property type="match status" value="1"/>
</dbReference>
<dbReference type="Pfam" id="PF08597">
    <property type="entry name" value="eIF3_subunit"/>
    <property type="match status" value="1"/>
</dbReference>
<comment type="function">
    <text evidence="1">Component of the eukaryotic translation initiation factor 3 (eIF-3) complex, which is involved in protein synthesis of a specialized repertoire of mRNAs and, together with other initiation factors, stimulates binding of mRNA and methionyl-tRNAi to the 40S ribosome. The eIF-3 complex specifically targets and initiates translation of a subset of mRNAs involved in cell proliferation.</text>
</comment>
<comment type="subunit">
    <text evidence="1">Component of the eukaryotic translation initiation factor 3 (eIF-3) complex.</text>
</comment>
<comment type="subcellular location">
    <subcellularLocation>
        <location evidence="1">Cytoplasm</location>
    </subcellularLocation>
</comment>
<comment type="similarity">
    <text evidence="1">Belongs to the eIF-3 subunit J family.</text>
</comment>
<keyword id="KW-0175">Coiled coil</keyword>
<keyword id="KW-0963">Cytoplasm</keyword>
<keyword id="KW-0396">Initiation factor</keyword>
<keyword id="KW-0648">Protein biosynthesis</keyword>
<keyword id="KW-1185">Reference proteome</keyword>
<protein>
    <recommendedName>
        <fullName evidence="1">Eukaryotic translation initiation factor 3 subunit J</fullName>
        <shortName evidence="1">eIF3j</shortName>
    </recommendedName>
    <alternativeName>
        <fullName evidence="1">Eukaryotic translation initiation factor 3 30 kDa subunit homolog</fullName>
        <shortName evidence="1">eIF-3 30 kDa subunit homolog</shortName>
    </alternativeName>
</protein>
<gene>
    <name type="primary">hcr1</name>
    <name type="ORF">ACLA_088540</name>
</gene>
<feature type="chain" id="PRO_0000366905" description="Eukaryotic translation initiation factor 3 subunit J">
    <location>
        <begin position="1"/>
        <end position="268"/>
    </location>
</feature>
<feature type="region of interest" description="Disordered" evidence="2">
    <location>
        <begin position="1"/>
        <end position="117"/>
    </location>
</feature>
<feature type="region of interest" description="Disordered" evidence="2">
    <location>
        <begin position="219"/>
        <end position="242"/>
    </location>
</feature>
<feature type="coiled-coil region" evidence="1">
    <location>
        <begin position="40"/>
        <end position="95"/>
    </location>
</feature>
<feature type="compositionally biased region" description="Acidic residues" evidence="2">
    <location>
        <begin position="26"/>
        <end position="44"/>
    </location>
</feature>
<feature type="compositionally biased region" description="Basic and acidic residues" evidence="2">
    <location>
        <begin position="45"/>
        <end position="65"/>
    </location>
</feature>
<feature type="compositionally biased region" description="Basic and acidic residues" evidence="2">
    <location>
        <begin position="72"/>
        <end position="86"/>
    </location>
</feature>
<feature type="compositionally biased region" description="Acidic residues" evidence="2">
    <location>
        <begin position="87"/>
        <end position="99"/>
    </location>
</feature>
<feature type="compositionally biased region" description="Basic and acidic residues" evidence="2">
    <location>
        <begin position="100"/>
        <end position="117"/>
    </location>
</feature>
<feature type="compositionally biased region" description="Basic and acidic residues" evidence="2">
    <location>
        <begin position="220"/>
        <end position="232"/>
    </location>
</feature>
<accession>A1CE66</accession>
<reference key="1">
    <citation type="journal article" date="2008" name="PLoS Genet.">
        <title>Genomic islands in the pathogenic filamentous fungus Aspergillus fumigatus.</title>
        <authorList>
            <person name="Fedorova N.D."/>
            <person name="Khaldi N."/>
            <person name="Joardar V.S."/>
            <person name="Maiti R."/>
            <person name="Amedeo P."/>
            <person name="Anderson M.J."/>
            <person name="Crabtree J."/>
            <person name="Silva J.C."/>
            <person name="Badger J.H."/>
            <person name="Albarraq A."/>
            <person name="Angiuoli S."/>
            <person name="Bussey H."/>
            <person name="Bowyer P."/>
            <person name="Cotty P.J."/>
            <person name="Dyer P.S."/>
            <person name="Egan A."/>
            <person name="Galens K."/>
            <person name="Fraser-Liggett C.M."/>
            <person name="Haas B.J."/>
            <person name="Inman J.M."/>
            <person name="Kent R."/>
            <person name="Lemieux S."/>
            <person name="Malavazi I."/>
            <person name="Orvis J."/>
            <person name="Roemer T."/>
            <person name="Ronning C.M."/>
            <person name="Sundaram J.P."/>
            <person name="Sutton G."/>
            <person name="Turner G."/>
            <person name="Venter J.C."/>
            <person name="White O.R."/>
            <person name="Whitty B.R."/>
            <person name="Youngman P."/>
            <person name="Wolfe K.H."/>
            <person name="Goldman G.H."/>
            <person name="Wortman J.R."/>
            <person name="Jiang B."/>
            <person name="Denning D.W."/>
            <person name="Nierman W.C."/>
        </authorList>
    </citation>
    <scope>NUCLEOTIDE SEQUENCE [LARGE SCALE GENOMIC DNA]</scope>
    <source>
        <strain>ATCC 1007 / CBS 513.65 / DSM 816 / NCTC 3887 / NRRL 1 / QM 1276 / 107</strain>
    </source>
</reference>
<proteinExistence type="inferred from homology"/>
<sequence length="268" mass="30062">MTPSKWDDEEESVSPPPVVNRRKFDDEEDEEVLDSWDAAEDSEVEREKAAKAAEAKAKAEAEAAAKKKSKAQRIEEHKAERRKNAEADSEEDEDEDEDEAEKRARLRRTEKDSDLKHAEDLFGDIDLNRSRNRGAPKAIVISDSADPTQAVDLSAMPLFKPTTKDQFARLTTTLIPLLTAHSKKPHYALWAQEFTKQLVKELNSGDVKKIASALTTVSNEKMREERAADKGSKKSKAAKTKVSLVANRDNKIDATSYDDDGLEDDDFM</sequence>